<proteinExistence type="inferred from homology"/>
<dbReference type="EC" id="3.4.11.18" evidence="1"/>
<dbReference type="EMBL" id="CP000123">
    <property type="protein sequence ID" value="ABC01688.1"/>
    <property type="molecule type" value="Genomic_DNA"/>
</dbReference>
<dbReference type="EMBL" id="Z33034">
    <property type="protein sequence ID" value="CAA83714.1"/>
    <property type="molecule type" value="Genomic_DNA"/>
</dbReference>
<dbReference type="PIR" id="S77843">
    <property type="entry name" value="S48593"/>
</dbReference>
<dbReference type="RefSeq" id="WP_011387530.1">
    <property type="nucleotide sequence ID" value="NC_007633.1"/>
</dbReference>
<dbReference type="SMR" id="Q59509"/>
<dbReference type="GeneID" id="23778371"/>
<dbReference type="KEGG" id="mcp:MCAP_0675"/>
<dbReference type="HOGENOM" id="CLU_015857_0_1_14"/>
<dbReference type="PhylomeDB" id="Q59509"/>
<dbReference type="Proteomes" id="UP000001928">
    <property type="component" value="Chromosome"/>
</dbReference>
<dbReference type="GO" id="GO:0005829">
    <property type="term" value="C:cytosol"/>
    <property type="evidence" value="ECO:0007669"/>
    <property type="project" value="TreeGrafter"/>
</dbReference>
<dbReference type="GO" id="GO:0004239">
    <property type="term" value="F:initiator methionyl aminopeptidase activity"/>
    <property type="evidence" value="ECO:0007669"/>
    <property type="project" value="UniProtKB-UniRule"/>
</dbReference>
<dbReference type="GO" id="GO:0046872">
    <property type="term" value="F:metal ion binding"/>
    <property type="evidence" value="ECO:0007669"/>
    <property type="project" value="UniProtKB-UniRule"/>
</dbReference>
<dbReference type="GO" id="GO:0070006">
    <property type="term" value="F:metalloaminopeptidase activity"/>
    <property type="evidence" value="ECO:0007669"/>
    <property type="project" value="UniProtKB-UniRule"/>
</dbReference>
<dbReference type="GO" id="GO:0006508">
    <property type="term" value="P:proteolysis"/>
    <property type="evidence" value="ECO:0007669"/>
    <property type="project" value="UniProtKB-KW"/>
</dbReference>
<dbReference type="CDD" id="cd01086">
    <property type="entry name" value="MetAP1"/>
    <property type="match status" value="1"/>
</dbReference>
<dbReference type="Gene3D" id="3.90.230.10">
    <property type="entry name" value="Creatinase/methionine aminopeptidase superfamily"/>
    <property type="match status" value="1"/>
</dbReference>
<dbReference type="HAMAP" id="MF_01974">
    <property type="entry name" value="MetAP_1"/>
    <property type="match status" value="1"/>
</dbReference>
<dbReference type="InterPro" id="IPR036005">
    <property type="entry name" value="Creatinase/aminopeptidase-like"/>
</dbReference>
<dbReference type="InterPro" id="IPR000994">
    <property type="entry name" value="Pept_M24"/>
</dbReference>
<dbReference type="InterPro" id="IPR001714">
    <property type="entry name" value="Pept_M24_MAP"/>
</dbReference>
<dbReference type="InterPro" id="IPR002467">
    <property type="entry name" value="Pept_M24A_MAP1"/>
</dbReference>
<dbReference type="NCBIfam" id="TIGR00500">
    <property type="entry name" value="met_pdase_I"/>
    <property type="match status" value="1"/>
</dbReference>
<dbReference type="PANTHER" id="PTHR43330">
    <property type="entry name" value="METHIONINE AMINOPEPTIDASE"/>
    <property type="match status" value="1"/>
</dbReference>
<dbReference type="PANTHER" id="PTHR43330:SF27">
    <property type="entry name" value="METHIONINE AMINOPEPTIDASE"/>
    <property type="match status" value="1"/>
</dbReference>
<dbReference type="Pfam" id="PF00557">
    <property type="entry name" value="Peptidase_M24"/>
    <property type="match status" value="1"/>
</dbReference>
<dbReference type="PRINTS" id="PR00599">
    <property type="entry name" value="MAPEPTIDASE"/>
</dbReference>
<dbReference type="SUPFAM" id="SSF55920">
    <property type="entry name" value="Creatinase/aminopeptidase"/>
    <property type="match status" value="1"/>
</dbReference>
<dbReference type="PROSITE" id="PS00680">
    <property type="entry name" value="MAP_1"/>
    <property type="match status" value="1"/>
</dbReference>
<sequence>MITIKNQEQIQKMKIAGQVLAKGLNLLKSMIKPGVNCLDLDKAFEEFIKQNGCESNFKNYQGFPKTICISINDQLIHGIPRDRVLLDGDVVSIDAGCMYEKWHADSAFTMVCGIAKNKKNDILIRVTEEALELAIAELKPGIRVGTIGSIIQNYVESFDFSVPRDYTGHGIGLALHEDPYIPNYGIPNTGIRLQEGMVICIEPMVQMGTYKTKIADDKWTVYSADHSITAHFEHTILITKDGCEVLTKTER</sequence>
<evidence type="ECO:0000255" key="1">
    <source>
        <dbReference type="HAMAP-Rule" id="MF_01974"/>
    </source>
</evidence>
<evidence type="ECO:0000305" key="2"/>
<gene>
    <name evidence="1" type="primary">map</name>
    <name type="ordered locus">MCAP_0675</name>
</gene>
<organism>
    <name type="scientific">Mycoplasma capricolum subsp. capricolum (strain California kid / ATCC 27343 / NCTC 10154)</name>
    <dbReference type="NCBI Taxonomy" id="340047"/>
    <lineage>
        <taxon>Bacteria</taxon>
        <taxon>Bacillati</taxon>
        <taxon>Mycoplasmatota</taxon>
        <taxon>Mollicutes</taxon>
        <taxon>Mycoplasmataceae</taxon>
        <taxon>Mycoplasma</taxon>
    </lineage>
</organism>
<reference key="1">
    <citation type="submission" date="2005-09" db="EMBL/GenBank/DDBJ databases">
        <authorList>
            <person name="Glass J.I."/>
            <person name="Lartigue C."/>
            <person name="Pfannkoch C."/>
            <person name="Baden-Tillson H."/>
            <person name="Smith H.O."/>
            <person name="Venter J.C."/>
            <person name="Roske K."/>
            <person name="Wise K.S."/>
            <person name="Calcutt M.J."/>
            <person name="Nelson W.C."/>
            <person name="Nierman W.C."/>
        </authorList>
    </citation>
    <scope>NUCLEOTIDE SEQUENCE [LARGE SCALE GENOMIC DNA]</scope>
    <source>
        <strain>California kid / ATCC 27343 / NCTC 10154</strain>
    </source>
</reference>
<reference key="2">
    <citation type="journal article" date="1995" name="Mol. Microbiol.">
        <title>Exploring the Mycoplasma capricolum genome: a minimal cell reveals its physiology.</title>
        <authorList>
            <person name="Bork P."/>
            <person name="Ouzounis C."/>
            <person name="Casari G."/>
            <person name="Schneider R."/>
            <person name="Sander C."/>
            <person name="Dolan M."/>
            <person name="Gilbert W."/>
            <person name="Gillevet P.M."/>
        </authorList>
    </citation>
    <scope>NUCLEOTIDE SEQUENCE [GENOMIC DNA] OF 111-251</scope>
</reference>
<keyword id="KW-0031">Aminopeptidase</keyword>
<keyword id="KW-0378">Hydrolase</keyword>
<keyword id="KW-0479">Metal-binding</keyword>
<keyword id="KW-0645">Protease</keyword>
<feature type="chain" id="PRO_0000148944" description="Methionine aminopeptidase">
    <location>
        <begin position="1"/>
        <end position="251"/>
    </location>
</feature>
<feature type="binding site" evidence="1">
    <location>
        <position position="77"/>
    </location>
    <ligand>
        <name>substrate</name>
    </ligand>
</feature>
<feature type="binding site" evidence="1">
    <location>
        <position position="94"/>
    </location>
    <ligand>
        <name>a divalent metal cation</name>
        <dbReference type="ChEBI" id="CHEBI:60240"/>
        <label>1</label>
    </ligand>
</feature>
<feature type="binding site" evidence="1">
    <location>
        <position position="105"/>
    </location>
    <ligand>
        <name>a divalent metal cation</name>
        <dbReference type="ChEBI" id="CHEBI:60240"/>
        <label>1</label>
    </ligand>
</feature>
<feature type="binding site" evidence="1">
    <location>
        <position position="105"/>
    </location>
    <ligand>
        <name>a divalent metal cation</name>
        <dbReference type="ChEBI" id="CHEBI:60240"/>
        <label>2</label>
        <note>catalytic</note>
    </ligand>
</feature>
<feature type="binding site" evidence="1">
    <location>
        <position position="169"/>
    </location>
    <ligand>
        <name>a divalent metal cation</name>
        <dbReference type="ChEBI" id="CHEBI:60240"/>
        <label>2</label>
        <note>catalytic</note>
    </ligand>
</feature>
<feature type="binding site" evidence="1">
    <location>
        <position position="176"/>
    </location>
    <ligand>
        <name>substrate</name>
    </ligand>
</feature>
<feature type="binding site" evidence="1">
    <location>
        <position position="202"/>
    </location>
    <ligand>
        <name>a divalent metal cation</name>
        <dbReference type="ChEBI" id="CHEBI:60240"/>
        <label>2</label>
        <note>catalytic</note>
    </ligand>
</feature>
<feature type="binding site" evidence="1">
    <location>
        <position position="233"/>
    </location>
    <ligand>
        <name>a divalent metal cation</name>
        <dbReference type="ChEBI" id="CHEBI:60240"/>
        <label>1</label>
    </ligand>
</feature>
<feature type="binding site" evidence="1">
    <location>
        <position position="233"/>
    </location>
    <ligand>
        <name>a divalent metal cation</name>
        <dbReference type="ChEBI" id="CHEBI:60240"/>
        <label>2</label>
        <note>catalytic</note>
    </ligand>
</feature>
<feature type="sequence conflict" description="In Ref. 2; CAA83714." evidence="2" ref="2">
    <original>GIA</original>
    <variation>EIR</variation>
    <location>
        <begin position="113"/>
        <end position="115"/>
    </location>
</feature>
<feature type="sequence conflict" description="In Ref. 2; CAA83714." evidence="2" ref="2">
    <original>R</original>
    <variation>G</variation>
    <location>
        <position position="125"/>
    </location>
</feature>
<feature type="sequence conflict" description="In Ref. 2; CAA83714." evidence="2" ref="2">
    <original>S</original>
    <variation>N</variation>
    <location>
        <position position="161"/>
    </location>
</feature>
<name>MAP1_MYCCT</name>
<protein>
    <recommendedName>
        <fullName evidence="1">Methionine aminopeptidase</fullName>
        <shortName evidence="1">MAP</shortName>
        <shortName evidence="1">MetAP</shortName>
        <ecNumber evidence="1">3.4.11.18</ecNumber>
    </recommendedName>
    <alternativeName>
        <fullName evidence="1">Peptidase M</fullName>
    </alternativeName>
</protein>
<accession>Q59509</accession>
<accession>Q2SRH4</accession>
<comment type="function">
    <text evidence="1">Removes the N-terminal methionine from nascent proteins. The N-terminal methionine is often cleaved when the second residue in the primary sequence is small and uncharged (Met-Ala-, Cys, Gly, Pro, Ser, Thr, or Val). Requires deformylation of the N(alpha)-formylated initiator methionine before it can be hydrolyzed.</text>
</comment>
<comment type="catalytic activity">
    <reaction evidence="1">
        <text>Release of N-terminal amino acids, preferentially methionine, from peptides and arylamides.</text>
        <dbReference type="EC" id="3.4.11.18"/>
    </reaction>
</comment>
<comment type="cofactor">
    <cofactor evidence="1">
        <name>Co(2+)</name>
        <dbReference type="ChEBI" id="CHEBI:48828"/>
    </cofactor>
    <cofactor evidence="1">
        <name>Zn(2+)</name>
        <dbReference type="ChEBI" id="CHEBI:29105"/>
    </cofactor>
    <cofactor evidence="1">
        <name>Mn(2+)</name>
        <dbReference type="ChEBI" id="CHEBI:29035"/>
    </cofactor>
    <cofactor evidence="1">
        <name>Fe(2+)</name>
        <dbReference type="ChEBI" id="CHEBI:29033"/>
    </cofactor>
    <text evidence="1">Binds 2 divalent metal cations per subunit. Has a high-affinity and a low affinity metal-binding site. The true nature of the physiological cofactor is under debate. The enzyme is active with cobalt, zinc, manganese or divalent iron ions. Most likely, methionine aminopeptidases function as mononuclear Fe(2+)-metalloproteases under physiological conditions, and the catalytically relevant metal-binding site has been assigned to the histidine-containing high-affinity site.</text>
</comment>
<comment type="subunit">
    <text evidence="1">Monomer.</text>
</comment>
<comment type="similarity">
    <text evidence="1">Belongs to the peptidase M24A family. Methionine aminopeptidase type 1 subfamily.</text>
</comment>